<gene>
    <name evidence="1" type="primary">serS</name>
    <name type="ordered locus">A1I_07550</name>
</gene>
<keyword id="KW-0030">Aminoacyl-tRNA synthetase</keyword>
<keyword id="KW-0067">ATP-binding</keyword>
<keyword id="KW-0963">Cytoplasm</keyword>
<keyword id="KW-0436">Ligase</keyword>
<keyword id="KW-0547">Nucleotide-binding</keyword>
<keyword id="KW-0648">Protein biosynthesis</keyword>
<accession>A8GY58</accession>
<reference key="1">
    <citation type="submission" date="2007-09" db="EMBL/GenBank/DDBJ databases">
        <title>Complete genome sequencing of Rickettsia bellii.</title>
        <authorList>
            <person name="Madan A."/>
            <person name="Lee H."/>
            <person name="Madan A."/>
            <person name="Yoon J.-G."/>
            <person name="Ryu G.-Y."/>
            <person name="Dasch G."/>
            <person name="Ereemeva M."/>
        </authorList>
    </citation>
    <scope>NUCLEOTIDE SEQUENCE [LARGE SCALE GENOMIC DNA]</scope>
    <source>
        <strain>OSU 85-389</strain>
    </source>
</reference>
<organism>
    <name type="scientific">Rickettsia bellii (strain OSU 85-389)</name>
    <dbReference type="NCBI Taxonomy" id="391896"/>
    <lineage>
        <taxon>Bacteria</taxon>
        <taxon>Pseudomonadati</taxon>
        <taxon>Pseudomonadota</taxon>
        <taxon>Alphaproteobacteria</taxon>
        <taxon>Rickettsiales</taxon>
        <taxon>Rickettsiaceae</taxon>
        <taxon>Rickettsieae</taxon>
        <taxon>Rickettsia</taxon>
        <taxon>belli group</taxon>
    </lineage>
</organism>
<feature type="chain" id="PRO_1000019799" description="Serine--tRNA ligase">
    <location>
        <begin position="1"/>
        <end position="426"/>
    </location>
</feature>
<feature type="binding site" evidence="1">
    <location>
        <begin position="229"/>
        <end position="231"/>
    </location>
    <ligand>
        <name>L-serine</name>
        <dbReference type="ChEBI" id="CHEBI:33384"/>
    </ligand>
</feature>
<feature type="binding site" evidence="1">
    <location>
        <begin position="260"/>
        <end position="262"/>
    </location>
    <ligand>
        <name>ATP</name>
        <dbReference type="ChEBI" id="CHEBI:30616"/>
    </ligand>
</feature>
<feature type="binding site" evidence="1">
    <location>
        <position position="283"/>
    </location>
    <ligand>
        <name>L-serine</name>
        <dbReference type="ChEBI" id="CHEBI:33384"/>
    </ligand>
</feature>
<feature type="binding site" evidence="1">
    <location>
        <begin position="347"/>
        <end position="350"/>
    </location>
    <ligand>
        <name>ATP</name>
        <dbReference type="ChEBI" id="CHEBI:30616"/>
    </ligand>
</feature>
<feature type="binding site" evidence="1">
    <location>
        <position position="383"/>
    </location>
    <ligand>
        <name>L-serine</name>
        <dbReference type="ChEBI" id="CHEBI:33384"/>
    </ligand>
</feature>
<proteinExistence type="inferred from homology"/>
<evidence type="ECO:0000255" key="1">
    <source>
        <dbReference type="HAMAP-Rule" id="MF_00176"/>
    </source>
</evidence>
<dbReference type="EC" id="6.1.1.11" evidence="1"/>
<dbReference type="EMBL" id="CP000849">
    <property type="protein sequence ID" value="ABV79808.1"/>
    <property type="molecule type" value="Genomic_DNA"/>
</dbReference>
<dbReference type="RefSeq" id="WP_012152271.1">
    <property type="nucleotide sequence ID" value="NC_009883.1"/>
</dbReference>
<dbReference type="SMR" id="A8GY58"/>
<dbReference type="KEGG" id="rbo:A1I_07550"/>
<dbReference type="HOGENOM" id="CLU_023797_1_1_5"/>
<dbReference type="UniPathway" id="UPA00906">
    <property type="reaction ID" value="UER00895"/>
</dbReference>
<dbReference type="GO" id="GO:0005737">
    <property type="term" value="C:cytoplasm"/>
    <property type="evidence" value="ECO:0007669"/>
    <property type="project" value="UniProtKB-SubCell"/>
</dbReference>
<dbReference type="GO" id="GO:0005524">
    <property type="term" value="F:ATP binding"/>
    <property type="evidence" value="ECO:0007669"/>
    <property type="project" value="UniProtKB-UniRule"/>
</dbReference>
<dbReference type="GO" id="GO:0004828">
    <property type="term" value="F:serine-tRNA ligase activity"/>
    <property type="evidence" value="ECO:0007669"/>
    <property type="project" value="UniProtKB-UniRule"/>
</dbReference>
<dbReference type="GO" id="GO:0016260">
    <property type="term" value="P:selenocysteine biosynthetic process"/>
    <property type="evidence" value="ECO:0007669"/>
    <property type="project" value="UniProtKB-UniRule"/>
</dbReference>
<dbReference type="GO" id="GO:0006434">
    <property type="term" value="P:seryl-tRNA aminoacylation"/>
    <property type="evidence" value="ECO:0007669"/>
    <property type="project" value="UniProtKB-UniRule"/>
</dbReference>
<dbReference type="CDD" id="cd00770">
    <property type="entry name" value="SerRS_core"/>
    <property type="match status" value="1"/>
</dbReference>
<dbReference type="Gene3D" id="3.30.930.10">
    <property type="entry name" value="Bira Bifunctional Protein, Domain 2"/>
    <property type="match status" value="1"/>
</dbReference>
<dbReference type="Gene3D" id="1.10.287.40">
    <property type="entry name" value="Serine-tRNA synthetase, tRNA binding domain"/>
    <property type="match status" value="1"/>
</dbReference>
<dbReference type="HAMAP" id="MF_00176">
    <property type="entry name" value="Ser_tRNA_synth_type1"/>
    <property type="match status" value="1"/>
</dbReference>
<dbReference type="InterPro" id="IPR002314">
    <property type="entry name" value="aa-tRNA-synt_IIb"/>
</dbReference>
<dbReference type="InterPro" id="IPR006195">
    <property type="entry name" value="aa-tRNA-synth_II"/>
</dbReference>
<dbReference type="InterPro" id="IPR045864">
    <property type="entry name" value="aa-tRNA-synth_II/BPL/LPL"/>
</dbReference>
<dbReference type="InterPro" id="IPR002317">
    <property type="entry name" value="Ser-tRNA-ligase_type_1"/>
</dbReference>
<dbReference type="InterPro" id="IPR015866">
    <property type="entry name" value="Ser-tRNA-synth_1_N"/>
</dbReference>
<dbReference type="InterPro" id="IPR042103">
    <property type="entry name" value="SerRS_1_N_sf"/>
</dbReference>
<dbReference type="InterPro" id="IPR033729">
    <property type="entry name" value="SerRS_core"/>
</dbReference>
<dbReference type="InterPro" id="IPR010978">
    <property type="entry name" value="tRNA-bd_arm"/>
</dbReference>
<dbReference type="NCBIfam" id="TIGR00414">
    <property type="entry name" value="serS"/>
    <property type="match status" value="1"/>
</dbReference>
<dbReference type="PANTHER" id="PTHR43697:SF1">
    <property type="entry name" value="SERINE--TRNA LIGASE"/>
    <property type="match status" value="1"/>
</dbReference>
<dbReference type="PANTHER" id="PTHR43697">
    <property type="entry name" value="SERYL-TRNA SYNTHETASE"/>
    <property type="match status" value="1"/>
</dbReference>
<dbReference type="Pfam" id="PF02403">
    <property type="entry name" value="Seryl_tRNA_N"/>
    <property type="match status" value="1"/>
</dbReference>
<dbReference type="Pfam" id="PF00587">
    <property type="entry name" value="tRNA-synt_2b"/>
    <property type="match status" value="1"/>
</dbReference>
<dbReference type="PIRSF" id="PIRSF001529">
    <property type="entry name" value="Ser-tRNA-synth_IIa"/>
    <property type="match status" value="1"/>
</dbReference>
<dbReference type="PRINTS" id="PR00981">
    <property type="entry name" value="TRNASYNTHSER"/>
</dbReference>
<dbReference type="SUPFAM" id="SSF55681">
    <property type="entry name" value="Class II aaRS and biotin synthetases"/>
    <property type="match status" value="1"/>
</dbReference>
<dbReference type="SUPFAM" id="SSF46589">
    <property type="entry name" value="tRNA-binding arm"/>
    <property type="match status" value="1"/>
</dbReference>
<dbReference type="PROSITE" id="PS50862">
    <property type="entry name" value="AA_TRNA_LIGASE_II"/>
    <property type="match status" value="1"/>
</dbReference>
<sequence>MLNIKWIRENQELFDDKLRQRFIEPMAKRIEELDGKKRKITNLIQEFQHARKVKSKILGNINPKSGEEFEGLQRDVKDINEKLEELEQDLNNNNELNELLNTLPNIPDEEVPYGIDESMNKLIRTHGEVDLNAQNKKQHFELGVKLDLMDFEQTAKISGARFVTLKGDLAKLERALANFMLDVHTGEFGFLEVSPPVLVRDNAMYNSGQLPKFADESFATTNGYRLIPTAEVSLVNMVADTIIPREKLPMRLVAYTPCFRSEAGSSGRDTRGMIRLHQFSKVELVSITTPEESKNEHEYMTNASETILQKLGLPYRTMLLCTGDMGFASQKTYDIEVWLPGQKQYREIASCSNCGDFQARRMKARYKEFGSHDTTLVHTLNASGLPIGRTMVAILENYQNEDGSITVPDVLVNYMGGLQKITAYKE</sequence>
<comment type="function">
    <text evidence="1">Catalyzes the attachment of serine to tRNA(Ser). Is also able to aminoacylate tRNA(Sec) with serine, to form the misacylated tRNA L-seryl-tRNA(Sec), which will be further converted into selenocysteinyl-tRNA(Sec).</text>
</comment>
<comment type="catalytic activity">
    <reaction evidence="1">
        <text>tRNA(Ser) + L-serine + ATP = L-seryl-tRNA(Ser) + AMP + diphosphate + H(+)</text>
        <dbReference type="Rhea" id="RHEA:12292"/>
        <dbReference type="Rhea" id="RHEA-COMP:9669"/>
        <dbReference type="Rhea" id="RHEA-COMP:9703"/>
        <dbReference type="ChEBI" id="CHEBI:15378"/>
        <dbReference type="ChEBI" id="CHEBI:30616"/>
        <dbReference type="ChEBI" id="CHEBI:33019"/>
        <dbReference type="ChEBI" id="CHEBI:33384"/>
        <dbReference type="ChEBI" id="CHEBI:78442"/>
        <dbReference type="ChEBI" id="CHEBI:78533"/>
        <dbReference type="ChEBI" id="CHEBI:456215"/>
        <dbReference type="EC" id="6.1.1.11"/>
    </reaction>
</comment>
<comment type="catalytic activity">
    <reaction evidence="1">
        <text>tRNA(Sec) + L-serine + ATP = L-seryl-tRNA(Sec) + AMP + diphosphate + H(+)</text>
        <dbReference type="Rhea" id="RHEA:42580"/>
        <dbReference type="Rhea" id="RHEA-COMP:9742"/>
        <dbReference type="Rhea" id="RHEA-COMP:10128"/>
        <dbReference type="ChEBI" id="CHEBI:15378"/>
        <dbReference type="ChEBI" id="CHEBI:30616"/>
        <dbReference type="ChEBI" id="CHEBI:33019"/>
        <dbReference type="ChEBI" id="CHEBI:33384"/>
        <dbReference type="ChEBI" id="CHEBI:78442"/>
        <dbReference type="ChEBI" id="CHEBI:78533"/>
        <dbReference type="ChEBI" id="CHEBI:456215"/>
        <dbReference type="EC" id="6.1.1.11"/>
    </reaction>
</comment>
<comment type="pathway">
    <text evidence="1">Aminoacyl-tRNA biosynthesis; selenocysteinyl-tRNA(Sec) biosynthesis; L-seryl-tRNA(Sec) from L-serine and tRNA(Sec): step 1/1.</text>
</comment>
<comment type="subunit">
    <text evidence="1">Homodimer. The tRNA molecule binds across the dimer.</text>
</comment>
<comment type="subcellular location">
    <subcellularLocation>
        <location evidence="1">Cytoplasm</location>
    </subcellularLocation>
</comment>
<comment type="domain">
    <text evidence="1">Consists of two distinct domains, a catalytic core and a N-terminal extension that is involved in tRNA binding.</text>
</comment>
<comment type="similarity">
    <text evidence="1">Belongs to the class-II aminoacyl-tRNA synthetase family. Type-1 seryl-tRNA synthetase subfamily.</text>
</comment>
<protein>
    <recommendedName>
        <fullName evidence="1">Serine--tRNA ligase</fullName>
        <ecNumber evidence="1">6.1.1.11</ecNumber>
    </recommendedName>
    <alternativeName>
        <fullName evidence="1">Seryl-tRNA synthetase</fullName>
        <shortName evidence="1">SerRS</shortName>
    </alternativeName>
    <alternativeName>
        <fullName evidence="1">Seryl-tRNA(Ser/Sec) synthetase</fullName>
    </alternativeName>
</protein>
<name>SYS_RICB8</name>